<gene>
    <name evidence="1" type="primary">fni</name>
    <name type="ordered locus">BCE_1626</name>
</gene>
<proteinExistence type="inferred from homology"/>
<keyword id="KW-0963">Cytoplasm</keyword>
<keyword id="KW-0285">Flavoprotein</keyword>
<keyword id="KW-0288">FMN</keyword>
<keyword id="KW-0413">Isomerase</keyword>
<keyword id="KW-0414">Isoprene biosynthesis</keyword>
<keyword id="KW-0460">Magnesium</keyword>
<keyword id="KW-0479">Metal-binding</keyword>
<keyword id="KW-0521">NADP</keyword>
<feature type="chain" id="PRO_0000229495" description="Isopentenyl-diphosphate delta-isomerase">
    <location>
        <begin position="1"/>
        <end position="349"/>
    </location>
</feature>
<feature type="binding site" evidence="1">
    <location>
        <begin position="6"/>
        <end position="7"/>
    </location>
    <ligand>
        <name>substrate</name>
    </ligand>
</feature>
<feature type="binding site" evidence="1">
    <location>
        <begin position="62"/>
        <end position="64"/>
    </location>
    <ligand>
        <name>FMN</name>
        <dbReference type="ChEBI" id="CHEBI:58210"/>
    </ligand>
</feature>
<feature type="binding site" evidence="1">
    <location>
        <position position="93"/>
    </location>
    <ligand>
        <name>FMN</name>
        <dbReference type="ChEBI" id="CHEBI:58210"/>
    </ligand>
</feature>
<feature type="binding site" evidence="1">
    <location>
        <position position="122"/>
    </location>
    <ligand>
        <name>FMN</name>
        <dbReference type="ChEBI" id="CHEBI:58210"/>
    </ligand>
</feature>
<feature type="binding site" evidence="1">
    <location>
        <position position="152"/>
    </location>
    <ligand>
        <name>substrate</name>
    </ligand>
</feature>
<feature type="binding site" evidence="1">
    <location>
        <position position="153"/>
    </location>
    <ligand>
        <name>Mg(2+)</name>
        <dbReference type="ChEBI" id="CHEBI:18420"/>
    </ligand>
</feature>
<feature type="binding site" evidence="1">
    <location>
        <position position="184"/>
    </location>
    <ligand>
        <name>FMN</name>
        <dbReference type="ChEBI" id="CHEBI:58210"/>
    </ligand>
</feature>
<feature type="binding site" evidence="1">
    <location>
        <position position="214"/>
    </location>
    <ligand>
        <name>FMN</name>
        <dbReference type="ChEBI" id="CHEBI:58210"/>
    </ligand>
</feature>
<feature type="binding site" evidence="1">
    <location>
        <begin position="258"/>
        <end position="259"/>
    </location>
    <ligand>
        <name>FMN</name>
        <dbReference type="ChEBI" id="CHEBI:58210"/>
    </ligand>
</feature>
<feature type="binding site" evidence="1">
    <location>
        <begin position="280"/>
        <end position="281"/>
    </location>
    <ligand>
        <name>FMN</name>
        <dbReference type="ChEBI" id="CHEBI:58210"/>
    </ligand>
</feature>
<protein>
    <recommendedName>
        <fullName evidence="1">Isopentenyl-diphosphate delta-isomerase</fullName>
        <shortName evidence="1">IPP isomerase</shortName>
        <ecNumber evidence="1">5.3.3.2</ecNumber>
    </recommendedName>
    <alternativeName>
        <fullName evidence="1">Isopentenyl diphosphate:dimethylallyl diphosphate isomerase</fullName>
    </alternativeName>
    <alternativeName>
        <fullName evidence="1">Isopentenyl pyrophosphate isomerase</fullName>
    </alternativeName>
    <alternativeName>
        <fullName evidence="1">Type 2 isopentenyl diphosphate isomerase</fullName>
        <shortName evidence="1">IDI-2</shortName>
    </alternativeName>
</protein>
<reference key="1">
    <citation type="journal article" date="2004" name="Nucleic Acids Res.">
        <title>The genome sequence of Bacillus cereus ATCC 10987 reveals metabolic adaptations and a large plasmid related to Bacillus anthracis pXO1.</title>
        <authorList>
            <person name="Rasko D.A."/>
            <person name="Ravel J."/>
            <person name="Oekstad O.A."/>
            <person name="Helgason E."/>
            <person name="Cer R.Z."/>
            <person name="Jiang L."/>
            <person name="Shores K.A."/>
            <person name="Fouts D.E."/>
            <person name="Tourasse N.J."/>
            <person name="Angiuoli S.V."/>
            <person name="Kolonay J.F."/>
            <person name="Nelson W.C."/>
            <person name="Kolstoe A.-B."/>
            <person name="Fraser C.M."/>
            <person name="Read T.D."/>
        </authorList>
    </citation>
    <scope>NUCLEOTIDE SEQUENCE [LARGE SCALE GENOMIC DNA]</scope>
    <source>
        <strain>ATCC 10987 / NRS 248</strain>
    </source>
</reference>
<evidence type="ECO:0000255" key="1">
    <source>
        <dbReference type="HAMAP-Rule" id="MF_00354"/>
    </source>
</evidence>
<organism>
    <name type="scientific">Bacillus cereus (strain ATCC 10987 / NRS 248)</name>
    <dbReference type="NCBI Taxonomy" id="222523"/>
    <lineage>
        <taxon>Bacteria</taxon>
        <taxon>Bacillati</taxon>
        <taxon>Bacillota</taxon>
        <taxon>Bacilli</taxon>
        <taxon>Bacillales</taxon>
        <taxon>Bacillaceae</taxon>
        <taxon>Bacillus</taxon>
        <taxon>Bacillus cereus group</taxon>
    </lineage>
</organism>
<sequence length="349" mass="38298">MVRAKRKLDHIEYALSTGQSRTHGFHDIDFVHQSLPNSNYDTITCETKIGELSLSSPIFINAMTGGGGEKTLHINEQLAYVAKHHNLAMAVGSQMAALKDESEAASYKIIRKVNPNGIFFANLGSEATIEQAERAVDMIEANALQIHLNVIQELTMPEGDRDFTGVLRRIEKIVLNSKVPVIVKEVGFGMSKETMQQLASIGVTAIDIGGQGGTNFAAVENERRQRMLSYFNNWGIQTATSIVEATSTNNNLSFIASGGIQTALDVAKAIALGANTTAFAGYFLRILMQDGIEKLVDEIDLLHTDLKFIMTALGAKTIEELQSVPLVVKGETYHWLTQRGIDTTHYSRR</sequence>
<accession>Q73AZ6</accession>
<name>IDI2_BACC1</name>
<comment type="function">
    <text evidence="1">Involved in the biosynthesis of isoprenoids. Catalyzes the 1,3-allylic rearrangement of the homoallylic substrate isopentenyl (IPP) to its allylic isomer, dimethylallyl diphosphate (DMAPP).</text>
</comment>
<comment type="catalytic activity">
    <reaction evidence="1">
        <text>isopentenyl diphosphate = dimethylallyl diphosphate</text>
        <dbReference type="Rhea" id="RHEA:23284"/>
        <dbReference type="ChEBI" id="CHEBI:57623"/>
        <dbReference type="ChEBI" id="CHEBI:128769"/>
        <dbReference type="EC" id="5.3.3.2"/>
    </reaction>
</comment>
<comment type="cofactor">
    <cofactor evidence="1">
        <name>FMN</name>
        <dbReference type="ChEBI" id="CHEBI:58210"/>
    </cofactor>
</comment>
<comment type="cofactor">
    <cofactor evidence="1">
        <name>NADPH</name>
        <dbReference type="ChEBI" id="CHEBI:57783"/>
    </cofactor>
</comment>
<comment type="cofactor">
    <cofactor evidence="1">
        <name>Mg(2+)</name>
        <dbReference type="ChEBI" id="CHEBI:18420"/>
    </cofactor>
</comment>
<comment type="subunit">
    <text evidence="1">Homooctamer. Dimer of tetramers.</text>
</comment>
<comment type="subcellular location">
    <subcellularLocation>
        <location evidence="1">Cytoplasm</location>
    </subcellularLocation>
</comment>
<comment type="similarity">
    <text evidence="1">Belongs to the IPP isomerase type 2 family.</text>
</comment>
<dbReference type="EC" id="5.3.3.2" evidence="1"/>
<dbReference type="EMBL" id="AE017194">
    <property type="protein sequence ID" value="AAS40555.1"/>
    <property type="molecule type" value="Genomic_DNA"/>
</dbReference>
<dbReference type="SMR" id="Q73AZ6"/>
<dbReference type="KEGG" id="bca:BCE_1626"/>
<dbReference type="HOGENOM" id="CLU_065515_0_0_9"/>
<dbReference type="Proteomes" id="UP000002527">
    <property type="component" value="Chromosome"/>
</dbReference>
<dbReference type="GO" id="GO:0005737">
    <property type="term" value="C:cytoplasm"/>
    <property type="evidence" value="ECO:0007669"/>
    <property type="project" value="UniProtKB-SubCell"/>
</dbReference>
<dbReference type="GO" id="GO:0010181">
    <property type="term" value="F:FMN binding"/>
    <property type="evidence" value="ECO:0007669"/>
    <property type="project" value="UniProtKB-UniRule"/>
</dbReference>
<dbReference type="GO" id="GO:0004452">
    <property type="term" value="F:isopentenyl-diphosphate delta-isomerase activity"/>
    <property type="evidence" value="ECO:0007669"/>
    <property type="project" value="UniProtKB-UniRule"/>
</dbReference>
<dbReference type="GO" id="GO:0000287">
    <property type="term" value="F:magnesium ion binding"/>
    <property type="evidence" value="ECO:0007669"/>
    <property type="project" value="UniProtKB-UniRule"/>
</dbReference>
<dbReference type="GO" id="GO:0070402">
    <property type="term" value="F:NADPH binding"/>
    <property type="evidence" value="ECO:0007669"/>
    <property type="project" value="UniProtKB-UniRule"/>
</dbReference>
<dbReference type="GO" id="GO:0016491">
    <property type="term" value="F:oxidoreductase activity"/>
    <property type="evidence" value="ECO:0007669"/>
    <property type="project" value="InterPro"/>
</dbReference>
<dbReference type="GO" id="GO:0008299">
    <property type="term" value="P:isoprenoid biosynthetic process"/>
    <property type="evidence" value="ECO:0007669"/>
    <property type="project" value="UniProtKB-UniRule"/>
</dbReference>
<dbReference type="CDD" id="cd02811">
    <property type="entry name" value="IDI-2_FMN"/>
    <property type="match status" value="1"/>
</dbReference>
<dbReference type="FunFam" id="3.20.20.70:FF:000115">
    <property type="entry name" value="Isopentenyl-diphosphate delta-isomerase"/>
    <property type="match status" value="1"/>
</dbReference>
<dbReference type="Gene3D" id="3.20.20.70">
    <property type="entry name" value="Aldolase class I"/>
    <property type="match status" value="1"/>
</dbReference>
<dbReference type="HAMAP" id="MF_00354">
    <property type="entry name" value="Idi_2"/>
    <property type="match status" value="1"/>
</dbReference>
<dbReference type="InterPro" id="IPR013785">
    <property type="entry name" value="Aldolase_TIM"/>
</dbReference>
<dbReference type="InterPro" id="IPR000262">
    <property type="entry name" value="FMN-dep_DH"/>
</dbReference>
<dbReference type="InterPro" id="IPR011179">
    <property type="entry name" value="IPdP_isomerase"/>
</dbReference>
<dbReference type="NCBIfam" id="TIGR02151">
    <property type="entry name" value="IPP_isom_2"/>
    <property type="match status" value="1"/>
</dbReference>
<dbReference type="PANTHER" id="PTHR43665">
    <property type="entry name" value="ISOPENTENYL-DIPHOSPHATE DELTA-ISOMERASE"/>
    <property type="match status" value="1"/>
</dbReference>
<dbReference type="PANTHER" id="PTHR43665:SF1">
    <property type="entry name" value="ISOPENTENYL-DIPHOSPHATE DELTA-ISOMERASE"/>
    <property type="match status" value="1"/>
</dbReference>
<dbReference type="Pfam" id="PF01070">
    <property type="entry name" value="FMN_dh"/>
    <property type="match status" value="1"/>
</dbReference>
<dbReference type="PIRSF" id="PIRSF003314">
    <property type="entry name" value="IPP_isomerase"/>
    <property type="match status" value="1"/>
</dbReference>
<dbReference type="SUPFAM" id="SSF51395">
    <property type="entry name" value="FMN-linked oxidoreductases"/>
    <property type="match status" value="1"/>
</dbReference>